<organism>
    <name type="scientific">Acorus calamus</name>
    <name type="common">Sweet flag</name>
    <dbReference type="NCBI Taxonomy" id="4465"/>
    <lineage>
        <taxon>Eukaryota</taxon>
        <taxon>Viridiplantae</taxon>
        <taxon>Streptophyta</taxon>
        <taxon>Embryophyta</taxon>
        <taxon>Tracheophyta</taxon>
        <taxon>Spermatophyta</taxon>
        <taxon>Magnoliopsida</taxon>
        <taxon>Liliopsida</taxon>
        <taxon>Acoraceae</taxon>
        <taxon>Acorus</taxon>
    </lineage>
</organism>
<keyword id="KW-0007">Acetylation</keyword>
<keyword id="KW-0148">Chlorophyll</keyword>
<keyword id="KW-0150">Chloroplast</keyword>
<keyword id="KW-0157">Chromophore</keyword>
<keyword id="KW-0249">Electron transport</keyword>
<keyword id="KW-0408">Iron</keyword>
<keyword id="KW-0460">Magnesium</keyword>
<keyword id="KW-0472">Membrane</keyword>
<keyword id="KW-0479">Metal-binding</keyword>
<keyword id="KW-0560">Oxidoreductase</keyword>
<keyword id="KW-0597">Phosphoprotein</keyword>
<keyword id="KW-0602">Photosynthesis</keyword>
<keyword id="KW-0604">Photosystem II</keyword>
<keyword id="KW-0934">Plastid</keyword>
<keyword id="KW-0793">Thylakoid</keyword>
<keyword id="KW-0812">Transmembrane</keyword>
<keyword id="KW-1133">Transmembrane helix</keyword>
<keyword id="KW-0813">Transport</keyword>
<comment type="function">
    <text evidence="2">Photosystem II (PSII) is a light-driven water:plastoquinone oxidoreductase that uses light energy to abstract electrons from H(2)O, generating O(2) and a proton gradient subsequently used for ATP formation. It consists of a core antenna complex that captures photons, and an electron transfer chain that converts photonic excitation into a charge separation. The D1/D2 (PsbA/PsbD) reaction center heterodimer binds P680, the primary electron donor of PSII as well as several subsequent electron acceptors. D2 is needed for assembly of a stable PSII complex.</text>
</comment>
<comment type="catalytic activity">
    <reaction evidence="2">
        <text>2 a plastoquinone + 4 hnu + 2 H2O = 2 a plastoquinol + O2</text>
        <dbReference type="Rhea" id="RHEA:36359"/>
        <dbReference type="Rhea" id="RHEA-COMP:9561"/>
        <dbReference type="Rhea" id="RHEA-COMP:9562"/>
        <dbReference type="ChEBI" id="CHEBI:15377"/>
        <dbReference type="ChEBI" id="CHEBI:15379"/>
        <dbReference type="ChEBI" id="CHEBI:17757"/>
        <dbReference type="ChEBI" id="CHEBI:30212"/>
        <dbReference type="ChEBI" id="CHEBI:62192"/>
        <dbReference type="EC" id="1.10.3.9"/>
    </reaction>
</comment>
<comment type="cofactor">
    <text evidence="2">The D1/D2 heterodimer binds P680, chlorophylls that are the primary electron donor of PSII, and subsequent electron acceptors. It shares a non-heme iron and each subunit binds pheophytin, quinone, additional chlorophylls, carotenoids and lipids. There is also a Cl(-1) ion associated with D1 and D2, which is required for oxygen evolution. The PSII complex binds additional chlorophylls, carotenoids and specific lipids.</text>
</comment>
<comment type="subunit">
    <text evidence="2">PSII is composed of 1 copy each of membrane proteins PsbA, PsbB, PsbC, PsbD, PsbE, PsbF, PsbH, PsbI, PsbJ, PsbK, PsbL, PsbM, PsbT, PsbX, PsbY, PsbZ, Psb30/Ycf12, at least 3 peripheral proteins of the oxygen-evolving complex and a large number of cofactors. It forms dimeric complexes.</text>
</comment>
<comment type="subcellular location">
    <subcellularLocation>
        <location evidence="2">Plastid</location>
        <location evidence="2">Chloroplast thylakoid membrane</location>
        <topology evidence="2">Multi-pass membrane protein</topology>
    </subcellularLocation>
</comment>
<comment type="miscellaneous">
    <text evidence="2">2 of the reaction center chlorophylls (ChlD1 and ChlD2) are entirely coordinated by water.</text>
</comment>
<comment type="similarity">
    <text evidence="2">Belongs to the reaction center PufL/M/PsbA/D family.</text>
</comment>
<geneLocation type="chloroplast"/>
<dbReference type="EC" id="1.10.3.9" evidence="2"/>
<dbReference type="EMBL" id="AJ879453">
    <property type="protein sequence ID" value="CAI53789.1"/>
    <property type="molecule type" value="Genomic_DNA"/>
</dbReference>
<dbReference type="RefSeq" id="YP_319760.1">
    <property type="nucleotide sequence ID" value="NC_007407.1"/>
</dbReference>
<dbReference type="SMR" id="Q3V539"/>
<dbReference type="GeneID" id="3677465"/>
<dbReference type="GO" id="GO:0009535">
    <property type="term" value="C:chloroplast thylakoid membrane"/>
    <property type="evidence" value="ECO:0007669"/>
    <property type="project" value="UniProtKB-SubCell"/>
</dbReference>
<dbReference type="GO" id="GO:0009523">
    <property type="term" value="C:photosystem II"/>
    <property type="evidence" value="ECO:0007669"/>
    <property type="project" value="UniProtKB-KW"/>
</dbReference>
<dbReference type="GO" id="GO:0016168">
    <property type="term" value="F:chlorophyll binding"/>
    <property type="evidence" value="ECO:0007669"/>
    <property type="project" value="UniProtKB-UniRule"/>
</dbReference>
<dbReference type="GO" id="GO:0045156">
    <property type="term" value="F:electron transporter, transferring electrons within the cyclic electron transport pathway of photosynthesis activity"/>
    <property type="evidence" value="ECO:0007669"/>
    <property type="project" value="InterPro"/>
</dbReference>
<dbReference type="GO" id="GO:0005506">
    <property type="term" value="F:iron ion binding"/>
    <property type="evidence" value="ECO:0007669"/>
    <property type="project" value="UniProtKB-UniRule"/>
</dbReference>
<dbReference type="GO" id="GO:0010242">
    <property type="term" value="F:oxygen evolving activity"/>
    <property type="evidence" value="ECO:0007669"/>
    <property type="project" value="UniProtKB-EC"/>
</dbReference>
<dbReference type="GO" id="GO:0009772">
    <property type="term" value="P:photosynthetic electron transport in photosystem II"/>
    <property type="evidence" value="ECO:0007669"/>
    <property type="project" value="InterPro"/>
</dbReference>
<dbReference type="CDD" id="cd09288">
    <property type="entry name" value="Photosystem-II_D2"/>
    <property type="match status" value="1"/>
</dbReference>
<dbReference type="FunFam" id="1.20.85.10:FF:000001">
    <property type="entry name" value="photosystem II D2 protein-like"/>
    <property type="match status" value="1"/>
</dbReference>
<dbReference type="Gene3D" id="1.20.85.10">
    <property type="entry name" value="Photosystem II protein D1-like"/>
    <property type="match status" value="1"/>
</dbReference>
<dbReference type="HAMAP" id="MF_01383">
    <property type="entry name" value="PSII_PsbD_D2"/>
    <property type="match status" value="1"/>
</dbReference>
<dbReference type="InterPro" id="IPR055266">
    <property type="entry name" value="D1/D2"/>
</dbReference>
<dbReference type="InterPro" id="IPR036854">
    <property type="entry name" value="Photo_II_D1/D2_sf"/>
</dbReference>
<dbReference type="InterPro" id="IPR000484">
    <property type="entry name" value="Photo_RC_L/M"/>
</dbReference>
<dbReference type="InterPro" id="IPR055265">
    <property type="entry name" value="Photo_RC_L/M_CS"/>
</dbReference>
<dbReference type="InterPro" id="IPR005868">
    <property type="entry name" value="PSII_PsbD/D2"/>
</dbReference>
<dbReference type="NCBIfam" id="TIGR01152">
    <property type="entry name" value="psbD"/>
    <property type="match status" value="1"/>
</dbReference>
<dbReference type="PANTHER" id="PTHR33149:SF12">
    <property type="entry name" value="PHOTOSYSTEM II D2 PROTEIN"/>
    <property type="match status" value="1"/>
</dbReference>
<dbReference type="PANTHER" id="PTHR33149">
    <property type="entry name" value="PHOTOSYSTEM II PROTEIN D1"/>
    <property type="match status" value="1"/>
</dbReference>
<dbReference type="Pfam" id="PF00124">
    <property type="entry name" value="Photo_RC"/>
    <property type="match status" value="1"/>
</dbReference>
<dbReference type="PRINTS" id="PR00256">
    <property type="entry name" value="REACTNCENTRE"/>
</dbReference>
<dbReference type="SUPFAM" id="SSF81483">
    <property type="entry name" value="Bacterial photosystem II reaction centre, L and M subunits"/>
    <property type="match status" value="1"/>
</dbReference>
<dbReference type="PROSITE" id="PS00244">
    <property type="entry name" value="REACTION_CENTER"/>
    <property type="match status" value="1"/>
</dbReference>
<sequence>MTIALGRFTKEENDLFDIMDDWLRRDRFVFVGWSGLLLFPCAYFALGGWFTGTTFVTSWYTHGLASSYLEGCNFLTAAVSTPANSLAHSLLLLWGPEAQGDFTRWCQLGGLWTFVALHGAFGLIGFMLRQFELARSVQLRPYNAIAFSGPIAVFVSVFLIYPLGQSGWFFAPSFGVAAIFRFILFFQGFHNWTLNPFHMMGVAGVLGAALLCAIHGATVENTLFEDGDGANTFRAFNPTQAEETYSMVTANRFWSQIFGVAFSNKRWLHFFMLFVPVTGLWMSALGVVGLALNLRAYDFVSQEIRAAEDPEFETFYTKNILLNEGIRAWMAAQDQPHENLIFPEEVLPRGNAL</sequence>
<protein>
    <recommendedName>
        <fullName evidence="2">Photosystem II D2 protein</fullName>
        <shortName evidence="2">PSII D2 protein</shortName>
        <ecNumber evidence="2">1.10.3.9</ecNumber>
    </recommendedName>
    <alternativeName>
        <fullName evidence="2">Photosystem Q(A) protein</fullName>
    </alternativeName>
</protein>
<accession>Q3V539</accession>
<evidence type="ECO:0000250" key="1">
    <source>
        <dbReference type="UniProtKB" id="P56761"/>
    </source>
</evidence>
<evidence type="ECO:0000255" key="2">
    <source>
        <dbReference type="HAMAP-Rule" id="MF_01383"/>
    </source>
</evidence>
<name>PSBD_ACOCL</name>
<reference key="1">
    <citation type="journal article" date="2005" name="Mol. Biol. Evol.">
        <title>Analysis of Acorus calamus chloroplast genome and its phylogenetic implications.</title>
        <authorList>
            <person name="Goremykin V.V."/>
            <person name="Holland B."/>
            <person name="Hirsch-Ernst K.I."/>
            <person name="Hellwig F.H."/>
        </authorList>
    </citation>
    <scope>NUCLEOTIDE SEQUENCE [LARGE SCALE GENOMIC DNA]</scope>
</reference>
<gene>
    <name evidence="2" type="primary">psbD</name>
</gene>
<feature type="initiator methionine" description="Removed" evidence="1">
    <location>
        <position position="1"/>
    </location>
</feature>
<feature type="chain" id="PRO_0000359616" description="Photosystem II D2 protein">
    <location>
        <begin position="2"/>
        <end position="353"/>
    </location>
</feature>
<feature type="transmembrane region" description="Helical" evidence="2">
    <location>
        <begin position="41"/>
        <end position="61"/>
    </location>
</feature>
<feature type="transmembrane region" description="Helical" evidence="2">
    <location>
        <begin position="125"/>
        <end position="141"/>
    </location>
</feature>
<feature type="transmembrane region" description="Helical" evidence="2">
    <location>
        <begin position="153"/>
        <end position="166"/>
    </location>
</feature>
<feature type="transmembrane region" description="Helical" evidence="2">
    <location>
        <begin position="208"/>
        <end position="228"/>
    </location>
</feature>
<feature type="transmembrane region" description="Helical" evidence="2">
    <location>
        <begin position="279"/>
        <end position="295"/>
    </location>
</feature>
<feature type="binding site" description="axial binding residue" evidence="2">
    <location>
        <position position="118"/>
    </location>
    <ligand>
        <name>chlorophyll a</name>
        <dbReference type="ChEBI" id="CHEBI:58416"/>
        <label>ChlzD2</label>
    </ligand>
    <ligandPart>
        <name>Mg</name>
        <dbReference type="ChEBI" id="CHEBI:25107"/>
    </ligandPart>
</feature>
<feature type="binding site" evidence="2">
    <location>
        <position position="130"/>
    </location>
    <ligand>
        <name>pheophytin a</name>
        <dbReference type="ChEBI" id="CHEBI:136840"/>
        <label>D2</label>
    </ligand>
</feature>
<feature type="binding site" evidence="2">
    <location>
        <position position="143"/>
    </location>
    <ligand>
        <name>pheophytin a</name>
        <dbReference type="ChEBI" id="CHEBI:136840"/>
        <label>D2</label>
    </ligand>
</feature>
<feature type="binding site" description="axial binding residue" evidence="2">
    <location>
        <position position="198"/>
    </location>
    <ligand>
        <name>chlorophyll a</name>
        <dbReference type="ChEBI" id="CHEBI:58416"/>
        <label>PD2</label>
    </ligand>
    <ligandPart>
        <name>Mg</name>
        <dbReference type="ChEBI" id="CHEBI:25107"/>
    </ligandPart>
</feature>
<feature type="binding site" evidence="2">
    <location>
        <position position="215"/>
    </location>
    <ligand>
        <name>a plastoquinone</name>
        <dbReference type="ChEBI" id="CHEBI:17757"/>
        <label>Q(A)</label>
    </ligand>
</feature>
<feature type="binding site" evidence="2">
    <location>
        <position position="215"/>
    </location>
    <ligand>
        <name>Fe cation</name>
        <dbReference type="ChEBI" id="CHEBI:24875"/>
        <note>ligand shared with heterodimeric partner</note>
    </ligand>
</feature>
<feature type="binding site" evidence="2">
    <location>
        <position position="262"/>
    </location>
    <ligand>
        <name>a plastoquinone</name>
        <dbReference type="ChEBI" id="CHEBI:17757"/>
        <label>Q(A)</label>
    </ligand>
</feature>
<feature type="binding site" evidence="2">
    <location>
        <position position="269"/>
    </location>
    <ligand>
        <name>Fe cation</name>
        <dbReference type="ChEBI" id="CHEBI:24875"/>
        <note>ligand shared with heterodimeric partner</note>
    </ligand>
</feature>
<feature type="modified residue" description="N-acetylthreonine" evidence="1">
    <location>
        <position position="2"/>
    </location>
</feature>
<feature type="modified residue" description="Phosphothreonine" evidence="1">
    <location>
        <position position="2"/>
    </location>
</feature>
<proteinExistence type="inferred from homology"/>